<comment type="catalytic activity">
    <reaction evidence="1">
        <text>urea + 2 H2O + H(+) = hydrogencarbonate + 2 NH4(+)</text>
        <dbReference type="Rhea" id="RHEA:20557"/>
        <dbReference type="ChEBI" id="CHEBI:15377"/>
        <dbReference type="ChEBI" id="CHEBI:15378"/>
        <dbReference type="ChEBI" id="CHEBI:16199"/>
        <dbReference type="ChEBI" id="CHEBI:17544"/>
        <dbReference type="ChEBI" id="CHEBI:28938"/>
        <dbReference type="EC" id="3.5.1.5"/>
    </reaction>
</comment>
<comment type="pathway">
    <text evidence="1">Nitrogen metabolism; urea degradation; CO(2) and NH(3) from urea (urease route): step 1/1.</text>
</comment>
<comment type="subunit">
    <text evidence="1">Heterotrimer of UreA (gamma), UreB (beta) and UreC (alpha) subunits. Three heterotrimers associate to form the active enzyme.</text>
</comment>
<comment type="subcellular location">
    <subcellularLocation>
        <location evidence="1">Cytoplasm</location>
    </subcellularLocation>
</comment>
<comment type="similarity">
    <text evidence="1">Belongs to the urease gamma subunit family.</text>
</comment>
<sequence>MELTPREKDKLLIFTAALLAERRKARGLKLNYPEAVALITAAIMEGARDGRTVAELMHEGTTVLTREDVMDGIAEMIPEIQVEATFPDGTKLVTVHHPIV</sequence>
<reference key="1">
    <citation type="journal article" date="2008" name="Genome Res.">
        <title>Genome sequence of the beta-rhizobium Cupriavidus taiwanensis and comparative genomics of rhizobia.</title>
        <authorList>
            <person name="Amadou C."/>
            <person name="Pascal G."/>
            <person name="Mangenot S."/>
            <person name="Glew M."/>
            <person name="Bontemps C."/>
            <person name="Capela D."/>
            <person name="Carrere S."/>
            <person name="Cruveiller S."/>
            <person name="Dossat C."/>
            <person name="Lajus A."/>
            <person name="Marchetti M."/>
            <person name="Poinsot V."/>
            <person name="Rouy Z."/>
            <person name="Servin B."/>
            <person name="Saad M."/>
            <person name="Schenowitz C."/>
            <person name="Barbe V."/>
            <person name="Batut J."/>
            <person name="Medigue C."/>
            <person name="Masson-Boivin C."/>
        </authorList>
    </citation>
    <scope>NUCLEOTIDE SEQUENCE [LARGE SCALE GENOMIC DNA]</scope>
    <source>
        <strain>DSM 17343 / BCRC 17206 / CCUG 44338 / CIP 107171 / LMG 19424 / R1</strain>
    </source>
</reference>
<organism>
    <name type="scientific">Cupriavidus taiwanensis (strain DSM 17343 / BCRC 17206 / CCUG 44338 / CIP 107171 / LMG 19424 / R1)</name>
    <name type="common">Ralstonia taiwanensis (strain LMG 19424)</name>
    <dbReference type="NCBI Taxonomy" id="977880"/>
    <lineage>
        <taxon>Bacteria</taxon>
        <taxon>Pseudomonadati</taxon>
        <taxon>Pseudomonadota</taxon>
        <taxon>Betaproteobacteria</taxon>
        <taxon>Burkholderiales</taxon>
        <taxon>Burkholderiaceae</taxon>
        <taxon>Cupriavidus</taxon>
    </lineage>
</organism>
<protein>
    <recommendedName>
        <fullName evidence="1">Urease subunit gamma</fullName>
        <ecNumber evidence="1">3.5.1.5</ecNumber>
    </recommendedName>
    <alternativeName>
        <fullName evidence="1">Urea amidohydrolase subunit gamma</fullName>
    </alternativeName>
</protein>
<gene>
    <name evidence="1" type="primary">ureA</name>
    <name type="ordered locus">RALTA_A1066</name>
</gene>
<dbReference type="EC" id="3.5.1.5" evidence="1"/>
<dbReference type="EMBL" id="CU633749">
    <property type="protein sequence ID" value="CAQ69031.1"/>
    <property type="molecule type" value="Genomic_DNA"/>
</dbReference>
<dbReference type="RefSeq" id="WP_012352360.1">
    <property type="nucleotide sequence ID" value="NC_010528.1"/>
</dbReference>
<dbReference type="SMR" id="B3R3Z9"/>
<dbReference type="GeneID" id="29760505"/>
<dbReference type="KEGG" id="cti:RALTA_A1066"/>
<dbReference type="eggNOG" id="COG0831">
    <property type="taxonomic scope" value="Bacteria"/>
</dbReference>
<dbReference type="HOGENOM" id="CLU_145825_1_0_4"/>
<dbReference type="BioCyc" id="CTAI977880:RALTA_RS05075-MONOMER"/>
<dbReference type="UniPathway" id="UPA00258">
    <property type="reaction ID" value="UER00370"/>
</dbReference>
<dbReference type="Proteomes" id="UP000001692">
    <property type="component" value="Chromosome 1"/>
</dbReference>
<dbReference type="GO" id="GO:0005737">
    <property type="term" value="C:cytoplasm"/>
    <property type="evidence" value="ECO:0007669"/>
    <property type="project" value="UniProtKB-SubCell"/>
</dbReference>
<dbReference type="GO" id="GO:0016151">
    <property type="term" value="F:nickel cation binding"/>
    <property type="evidence" value="ECO:0007669"/>
    <property type="project" value="InterPro"/>
</dbReference>
<dbReference type="GO" id="GO:0009039">
    <property type="term" value="F:urease activity"/>
    <property type="evidence" value="ECO:0007669"/>
    <property type="project" value="UniProtKB-UniRule"/>
</dbReference>
<dbReference type="GO" id="GO:0043419">
    <property type="term" value="P:urea catabolic process"/>
    <property type="evidence" value="ECO:0007669"/>
    <property type="project" value="UniProtKB-UniRule"/>
</dbReference>
<dbReference type="CDD" id="cd00390">
    <property type="entry name" value="Urease_gamma"/>
    <property type="match status" value="1"/>
</dbReference>
<dbReference type="Gene3D" id="3.30.280.10">
    <property type="entry name" value="Urease, gamma-like subunit"/>
    <property type="match status" value="1"/>
</dbReference>
<dbReference type="HAMAP" id="MF_00739">
    <property type="entry name" value="Urease_gamma"/>
    <property type="match status" value="1"/>
</dbReference>
<dbReference type="InterPro" id="IPR012010">
    <property type="entry name" value="Urease_gamma"/>
</dbReference>
<dbReference type="InterPro" id="IPR002026">
    <property type="entry name" value="Urease_gamma/gamma-beta_su"/>
</dbReference>
<dbReference type="InterPro" id="IPR036463">
    <property type="entry name" value="Urease_gamma_sf"/>
</dbReference>
<dbReference type="InterPro" id="IPR050069">
    <property type="entry name" value="Urease_subunit"/>
</dbReference>
<dbReference type="NCBIfam" id="NF009712">
    <property type="entry name" value="PRK13241.1"/>
    <property type="match status" value="1"/>
</dbReference>
<dbReference type="NCBIfam" id="TIGR00193">
    <property type="entry name" value="urease_gam"/>
    <property type="match status" value="1"/>
</dbReference>
<dbReference type="PANTHER" id="PTHR33569">
    <property type="entry name" value="UREASE"/>
    <property type="match status" value="1"/>
</dbReference>
<dbReference type="PANTHER" id="PTHR33569:SF1">
    <property type="entry name" value="UREASE"/>
    <property type="match status" value="1"/>
</dbReference>
<dbReference type="Pfam" id="PF00547">
    <property type="entry name" value="Urease_gamma"/>
    <property type="match status" value="1"/>
</dbReference>
<dbReference type="PIRSF" id="PIRSF001223">
    <property type="entry name" value="Urease_gamma"/>
    <property type="match status" value="1"/>
</dbReference>
<dbReference type="SUPFAM" id="SSF54111">
    <property type="entry name" value="Urease, gamma-subunit"/>
    <property type="match status" value="1"/>
</dbReference>
<evidence type="ECO:0000255" key="1">
    <source>
        <dbReference type="HAMAP-Rule" id="MF_00739"/>
    </source>
</evidence>
<name>URE3_CUPTR</name>
<keyword id="KW-0963">Cytoplasm</keyword>
<keyword id="KW-0378">Hydrolase</keyword>
<feature type="chain" id="PRO_1000199859" description="Urease subunit gamma">
    <location>
        <begin position="1"/>
        <end position="100"/>
    </location>
</feature>
<proteinExistence type="inferred from homology"/>
<accession>B3R3Z9</accession>